<name>CBP3_ORYSJ</name>
<reference key="1">
    <citation type="journal article" date="1992" name="Plant Mol. Biol.">
        <title>Structure and expression during the germination of rice seeds of the gene for a carboxypeptidase.</title>
        <authorList>
            <person name="Washio K."/>
            <person name="Ishikawa K."/>
        </authorList>
    </citation>
    <scope>NUCLEOTIDE SEQUENCE [GENOMIC DNA]</scope>
    <source>
        <strain>cv. Yukihikari</strain>
        <tissue>Seed</tissue>
    </source>
</reference>
<reference key="2">
    <citation type="journal article" date="2005" name="Nature">
        <title>The map-based sequence of the rice genome.</title>
        <authorList>
            <consortium name="International rice genome sequencing project (IRGSP)"/>
        </authorList>
    </citation>
    <scope>NUCLEOTIDE SEQUENCE [LARGE SCALE GENOMIC DNA]</scope>
    <source>
        <strain>cv. Nipponbare</strain>
    </source>
</reference>
<reference key="3">
    <citation type="journal article" date="2008" name="Nucleic Acids Res.">
        <title>The rice annotation project database (RAP-DB): 2008 update.</title>
        <authorList>
            <consortium name="The rice annotation project (RAP)"/>
        </authorList>
    </citation>
    <scope>GENOME REANNOTATION</scope>
    <source>
        <strain>cv. Nipponbare</strain>
    </source>
</reference>
<reference key="4">
    <citation type="journal article" date="2013" name="Rice">
        <title>Improvement of the Oryza sativa Nipponbare reference genome using next generation sequence and optical map data.</title>
        <authorList>
            <person name="Kawahara Y."/>
            <person name="de la Bastide M."/>
            <person name="Hamilton J.P."/>
            <person name="Kanamori H."/>
            <person name="McCombie W.R."/>
            <person name="Ouyang S."/>
            <person name="Schwartz D.C."/>
            <person name="Tanaka T."/>
            <person name="Wu J."/>
            <person name="Zhou S."/>
            <person name="Childs K.L."/>
            <person name="Davidson R.M."/>
            <person name="Lin H."/>
            <person name="Quesada-Ocampo L."/>
            <person name="Vaillancourt B."/>
            <person name="Sakai H."/>
            <person name="Lee S.S."/>
            <person name="Kim J."/>
            <person name="Numa H."/>
            <person name="Itoh T."/>
            <person name="Buell C.R."/>
            <person name="Matsumoto T."/>
        </authorList>
    </citation>
    <scope>GENOME REANNOTATION</scope>
    <source>
        <strain>cv. Nipponbare</strain>
    </source>
</reference>
<reference key="5">
    <citation type="journal article" date="2005" name="PLoS Biol.">
        <title>The genomes of Oryza sativa: a history of duplications.</title>
        <authorList>
            <person name="Yu J."/>
            <person name="Wang J."/>
            <person name="Lin W."/>
            <person name="Li S."/>
            <person name="Li H."/>
            <person name="Zhou J."/>
            <person name="Ni P."/>
            <person name="Dong W."/>
            <person name="Hu S."/>
            <person name="Zeng C."/>
            <person name="Zhang J."/>
            <person name="Zhang Y."/>
            <person name="Li R."/>
            <person name="Xu Z."/>
            <person name="Li S."/>
            <person name="Li X."/>
            <person name="Zheng H."/>
            <person name="Cong L."/>
            <person name="Lin L."/>
            <person name="Yin J."/>
            <person name="Geng J."/>
            <person name="Li G."/>
            <person name="Shi J."/>
            <person name="Liu J."/>
            <person name="Lv H."/>
            <person name="Li J."/>
            <person name="Wang J."/>
            <person name="Deng Y."/>
            <person name="Ran L."/>
            <person name="Shi X."/>
            <person name="Wang X."/>
            <person name="Wu Q."/>
            <person name="Li C."/>
            <person name="Ren X."/>
            <person name="Wang J."/>
            <person name="Wang X."/>
            <person name="Li D."/>
            <person name="Liu D."/>
            <person name="Zhang X."/>
            <person name="Ji Z."/>
            <person name="Zhao W."/>
            <person name="Sun Y."/>
            <person name="Zhang Z."/>
            <person name="Bao J."/>
            <person name="Han Y."/>
            <person name="Dong L."/>
            <person name="Ji J."/>
            <person name="Chen P."/>
            <person name="Wu S."/>
            <person name="Liu J."/>
            <person name="Xiao Y."/>
            <person name="Bu D."/>
            <person name="Tan J."/>
            <person name="Yang L."/>
            <person name="Ye C."/>
            <person name="Zhang J."/>
            <person name="Xu J."/>
            <person name="Zhou Y."/>
            <person name="Yu Y."/>
            <person name="Zhang B."/>
            <person name="Zhuang S."/>
            <person name="Wei H."/>
            <person name="Liu B."/>
            <person name="Lei M."/>
            <person name="Yu H."/>
            <person name="Li Y."/>
            <person name="Xu H."/>
            <person name="Wei S."/>
            <person name="He X."/>
            <person name="Fang L."/>
            <person name="Zhang Z."/>
            <person name="Zhang Y."/>
            <person name="Huang X."/>
            <person name="Su Z."/>
            <person name="Tong W."/>
            <person name="Li J."/>
            <person name="Tong Z."/>
            <person name="Li S."/>
            <person name="Ye J."/>
            <person name="Wang L."/>
            <person name="Fang L."/>
            <person name="Lei T."/>
            <person name="Chen C.-S."/>
            <person name="Chen H.-C."/>
            <person name="Xu Z."/>
            <person name="Li H."/>
            <person name="Huang H."/>
            <person name="Zhang F."/>
            <person name="Xu H."/>
            <person name="Li N."/>
            <person name="Zhao C."/>
            <person name="Li S."/>
            <person name="Dong L."/>
            <person name="Huang Y."/>
            <person name="Li L."/>
            <person name="Xi Y."/>
            <person name="Qi Q."/>
            <person name="Li W."/>
            <person name="Zhang B."/>
            <person name="Hu W."/>
            <person name="Zhang Y."/>
            <person name="Tian X."/>
            <person name="Jiao Y."/>
            <person name="Liang X."/>
            <person name="Jin J."/>
            <person name="Gao L."/>
            <person name="Zheng W."/>
            <person name="Hao B."/>
            <person name="Liu S.-M."/>
            <person name="Wang W."/>
            <person name="Yuan L."/>
            <person name="Cao M."/>
            <person name="McDermott J."/>
            <person name="Samudrala R."/>
            <person name="Wang J."/>
            <person name="Wong G.K.-S."/>
            <person name="Yang H."/>
        </authorList>
    </citation>
    <scope>NUCLEOTIDE SEQUENCE [LARGE SCALE GENOMIC DNA]</scope>
    <source>
        <strain>cv. Nipponbare</strain>
    </source>
</reference>
<reference key="6">
    <citation type="journal article" date="2003" name="Science">
        <title>Collection, mapping, and annotation of over 28,000 cDNA clones from japonica rice.</title>
        <authorList>
            <consortium name="The rice full-length cDNA consortium"/>
        </authorList>
    </citation>
    <scope>NUCLEOTIDE SEQUENCE [LARGE SCALE MRNA]</scope>
    <source>
        <strain>cv. Nipponbare</strain>
    </source>
</reference>
<feature type="signal peptide" evidence="2">
    <location>
        <begin position="1"/>
        <end position="21"/>
    </location>
</feature>
<feature type="propeptide" id="PRO_0000004327" evidence="1">
    <location>
        <begin position="22"/>
        <end position="73"/>
    </location>
</feature>
<feature type="chain" id="PRO_0000004328" description="Serine carboxypeptidase 3">
    <location>
        <begin position="74"/>
        <end position="484"/>
    </location>
</feature>
<feature type="propeptide" id="PRO_0000004329" evidence="1">
    <location>
        <begin position="485"/>
        <end position="500"/>
    </location>
</feature>
<feature type="active site" evidence="1">
    <location>
        <position position="216"/>
    </location>
</feature>
<feature type="active site" evidence="1">
    <location>
        <position position="404"/>
    </location>
</feature>
<feature type="active site" evidence="1">
    <location>
        <position position="461"/>
    </location>
</feature>
<feature type="binding site" evidence="1">
    <location>
        <position position="407"/>
    </location>
    <ligand>
        <name>substrate</name>
    </ligand>
</feature>
<feature type="glycosylation site" description="N-linked (GlcNAc...) asparagine" evidence="2">
    <location>
        <position position="144"/>
    </location>
</feature>
<feature type="disulfide bond" evidence="1">
    <location>
        <begin position="126"/>
        <end position="366"/>
    </location>
</feature>
<feature type="disulfide bond" evidence="1">
    <location>
        <begin position="294"/>
        <end position="309"/>
    </location>
</feature>
<feature type="disulfide bond" evidence="1">
    <location>
        <begin position="332"/>
        <end position="337"/>
    </location>
</feature>
<proteinExistence type="evidence at transcript level"/>
<sequence length="500" mass="55446">MATARVSLILLVVVLAASACAEGLRLPRDAKFPAAQAERLIRSLNLLPKEAGPTGAGDVPSVAPGELLERRVTLPGLPQGVGDLGHHAGYYRLPNTHDARMFYFLFESRGKKEDPVVIWLTGGPGCSSELAVFYENGPFTISNNMSLAWNKFGWDTISNIIFVDQPTGTGFSYSSDDRDTRHDETGVSNDLYSFLQVFFKKHPEFAKNDFFITGESYAGHYIPAFASRVHQGNKANEGIHINLKGFAIGNGLTDPAIQYKAYTDYALDMNLIKKSDYDRINKFIPPCEFAIKLCGTNGKASCMAAYMVCNSIFSSIMKLVGTKNYYDVRKECEGKLCYDFSNLEKFFGDKAVKEAIGVGDLEFVSCSTTVYQAMLTDWMRNLEVGIPALLEDGINVLIYAGEYDLICNWLGNSRWVHSMEWSGQKDFVSSHESPFVVDGAEAGVLKSHGPLSFLKVHNAGHMVPMDQPKASLEMLRRFTQGKLKEEWLAELPEQPMYAAM</sequence>
<organism>
    <name type="scientific">Oryza sativa subsp. japonica</name>
    <name type="common">Rice</name>
    <dbReference type="NCBI Taxonomy" id="39947"/>
    <lineage>
        <taxon>Eukaryota</taxon>
        <taxon>Viridiplantae</taxon>
        <taxon>Streptophyta</taxon>
        <taxon>Embryophyta</taxon>
        <taxon>Tracheophyta</taxon>
        <taxon>Spermatophyta</taxon>
        <taxon>Magnoliopsida</taxon>
        <taxon>Liliopsida</taxon>
        <taxon>Poales</taxon>
        <taxon>Poaceae</taxon>
        <taxon>BOP clade</taxon>
        <taxon>Oryzoideae</taxon>
        <taxon>Oryzeae</taxon>
        <taxon>Oryzinae</taxon>
        <taxon>Oryza</taxon>
        <taxon>Oryza sativa</taxon>
    </lineage>
</organism>
<keyword id="KW-0121">Carboxypeptidase</keyword>
<keyword id="KW-1015">Disulfide bond</keyword>
<keyword id="KW-0325">Glycoprotein</keyword>
<keyword id="KW-0378">Hydrolase</keyword>
<keyword id="KW-0645">Protease</keyword>
<keyword id="KW-1185">Reference proteome</keyword>
<keyword id="KW-0732">Signal</keyword>
<keyword id="KW-0865">Zymogen</keyword>
<accession>P37891</accession>
<accession>Q0E4K7</accession>
<accession>Q6Z7C2</accession>
<comment type="catalytic activity">
    <reaction evidence="3 4">
        <text>Release of a C-terminal amino acid with broad specificity.</text>
        <dbReference type="EC" id="3.4.16.5"/>
    </reaction>
</comment>
<comment type="subunit">
    <text evidence="5">Monomer.</text>
</comment>
<comment type="induction">
    <text>By gibberellic acid (GA). Inhibited by abscisic acid (ABA).</text>
</comment>
<comment type="similarity">
    <text evidence="5">Belongs to the peptidase S10 family.</text>
</comment>
<dbReference type="EC" id="3.4.16.5"/>
<dbReference type="EMBL" id="D10985">
    <property type="protein sequence ID" value="BAA01757.1"/>
    <property type="molecule type" value="Genomic_DNA"/>
</dbReference>
<dbReference type="EMBL" id="AP004090">
    <property type="protein sequence ID" value="BAD07648.1"/>
    <property type="molecule type" value="Genomic_DNA"/>
</dbReference>
<dbReference type="EMBL" id="AP004867">
    <property type="protein sequence ID" value="BAD07926.1"/>
    <property type="molecule type" value="Genomic_DNA"/>
</dbReference>
<dbReference type="EMBL" id="AP008208">
    <property type="protein sequence ID" value="BAF07581.1"/>
    <property type="molecule type" value="Genomic_DNA"/>
</dbReference>
<dbReference type="EMBL" id="AP014958">
    <property type="protein sequence ID" value="BAS76637.1"/>
    <property type="molecule type" value="Genomic_DNA"/>
</dbReference>
<dbReference type="EMBL" id="CM000139">
    <property type="protein sequence ID" value="EAZ21483.1"/>
    <property type="molecule type" value="Genomic_DNA"/>
</dbReference>
<dbReference type="EMBL" id="AK061078">
    <property type="protein sequence ID" value="BAG87715.1"/>
    <property type="molecule type" value="mRNA"/>
</dbReference>
<dbReference type="PIR" id="S22530">
    <property type="entry name" value="S22530"/>
</dbReference>
<dbReference type="RefSeq" id="XP_015626272.1">
    <property type="nucleotide sequence ID" value="XM_015770786.1"/>
</dbReference>
<dbReference type="SMR" id="P37891"/>
<dbReference type="FunCoup" id="P37891">
    <property type="interactions" value="969"/>
</dbReference>
<dbReference type="STRING" id="39947.P37891"/>
<dbReference type="ESTHER" id="orysa-cbp3">
    <property type="family name" value="Carboxypeptidase_S10"/>
</dbReference>
<dbReference type="MEROPS" id="S10.009"/>
<dbReference type="GlyCosmos" id="P37891">
    <property type="glycosylation" value="1 site, No reported glycans"/>
</dbReference>
<dbReference type="PaxDb" id="39947-P37891"/>
<dbReference type="EnsemblPlants" id="Os02t0114200-01">
    <property type="protein sequence ID" value="Os02t0114200-01"/>
    <property type="gene ID" value="Os02g0114200"/>
</dbReference>
<dbReference type="Gramene" id="Os02t0114200-01">
    <property type="protein sequence ID" value="Os02t0114200-01"/>
    <property type="gene ID" value="Os02g0114200"/>
</dbReference>
<dbReference type="KEGG" id="dosa:Os02g0114200"/>
<dbReference type="eggNOG" id="KOG1282">
    <property type="taxonomic scope" value="Eukaryota"/>
</dbReference>
<dbReference type="HOGENOM" id="CLU_008523_10_1_1"/>
<dbReference type="InParanoid" id="P37891"/>
<dbReference type="OMA" id="KQDYVEC"/>
<dbReference type="OrthoDB" id="443318at2759"/>
<dbReference type="Proteomes" id="UP000000763">
    <property type="component" value="Chromosome 2"/>
</dbReference>
<dbReference type="Proteomes" id="UP000007752">
    <property type="component" value="Chromosome 2"/>
</dbReference>
<dbReference type="Proteomes" id="UP000059680">
    <property type="component" value="Chromosome 2"/>
</dbReference>
<dbReference type="ExpressionAtlas" id="P37891">
    <property type="expression patterns" value="baseline and differential"/>
</dbReference>
<dbReference type="GO" id="GO:0005773">
    <property type="term" value="C:vacuole"/>
    <property type="evidence" value="ECO:0000318"/>
    <property type="project" value="GO_Central"/>
</dbReference>
<dbReference type="GO" id="GO:0004185">
    <property type="term" value="F:serine-type carboxypeptidase activity"/>
    <property type="evidence" value="ECO:0000318"/>
    <property type="project" value="GO_Central"/>
</dbReference>
<dbReference type="GO" id="GO:0006508">
    <property type="term" value="P:proteolysis"/>
    <property type="evidence" value="ECO:0007669"/>
    <property type="project" value="UniProtKB-KW"/>
</dbReference>
<dbReference type="FunFam" id="3.40.50.1820:FF:000060">
    <property type="entry name" value="Carboxypeptidase"/>
    <property type="match status" value="1"/>
</dbReference>
<dbReference type="Gene3D" id="3.40.50.1820">
    <property type="entry name" value="alpha/beta hydrolase"/>
    <property type="match status" value="1"/>
</dbReference>
<dbReference type="InterPro" id="IPR029058">
    <property type="entry name" value="AB_hydrolase_fold"/>
</dbReference>
<dbReference type="InterPro" id="IPR001563">
    <property type="entry name" value="Peptidase_S10"/>
</dbReference>
<dbReference type="InterPro" id="IPR033124">
    <property type="entry name" value="Ser_caboxypep_his_AS"/>
</dbReference>
<dbReference type="InterPro" id="IPR018202">
    <property type="entry name" value="Ser_caboxypep_ser_AS"/>
</dbReference>
<dbReference type="PANTHER" id="PTHR11802:SF259">
    <property type="entry name" value="SERINE CARBOXYPEPTIDASE-LIKE 48"/>
    <property type="match status" value="1"/>
</dbReference>
<dbReference type="PANTHER" id="PTHR11802">
    <property type="entry name" value="SERINE PROTEASE FAMILY S10 SERINE CARBOXYPEPTIDASE"/>
    <property type="match status" value="1"/>
</dbReference>
<dbReference type="Pfam" id="PF00450">
    <property type="entry name" value="Peptidase_S10"/>
    <property type="match status" value="1"/>
</dbReference>
<dbReference type="PRINTS" id="PR00724">
    <property type="entry name" value="CRBOXYPTASEC"/>
</dbReference>
<dbReference type="SUPFAM" id="SSF53474">
    <property type="entry name" value="alpha/beta-Hydrolases"/>
    <property type="match status" value="1"/>
</dbReference>
<dbReference type="PROSITE" id="PS00560">
    <property type="entry name" value="CARBOXYPEPT_SER_HIS"/>
    <property type="match status" value="1"/>
</dbReference>
<dbReference type="PROSITE" id="PS00131">
    <property type="entry name" value="CARBOXYPEPT_SER_SER"/>
    <property type="match status" value="1"/>
</dbReference>
<evidence type="ECO:0000250" key="1"/>
<evidence type="ECO:0000255" key="2"/>
<evidence type="ECO:0000255" key="3">
    <source>
        <dbReference type="PROSITE-ProRule" id="PRU10074"/>
    </source>
</evidence>
<evidence type="ECO:0000255" key="4">
    <source>
        <dbReference type="PROSITE-ProRule" id="PRU10075"/>
    </source>
</evidence>
<evidence type="ECO:0000305" key="5"/>
<evidence type="ECO:0000312" key="6">
    <source>
        <dbReference type="EMBL" id="EAZ21483.1"/>
    </source>
</evidence>
<gene>
    <name type="primary">CBP3</name>
    <name type="ordered locus">Os02g0114200</name>
    <name type="ordered locus">LOC_Os02g02320</name>
    <name type="ORF">OJ1399_H05.34</name>
    <name evidence="6" type="ORF">OsJ_05092</name>
    <name type="ORF">P0036E06.13</name>
</gene>
<protein>
    <recommendedName>
        <fullName>Serine carboxypeptidase 3</fullName>
        <ecNumber>3.4.16.5</ecNumber>
    </recommendedName>
    <alternativeName>
        <fullName>Serine carboxypeptidase III</fullName>
    </alternativeName>
</protein>